<comment type="function">
    <text evidence="1">Catalyzes the methylthiolation of N6-(dimethylallyl)adenosine (i(6)A), leading to the formation of 2-methylthio-N6-(dimethylallyl)adenosine (ms(2)i(6)A) at position 37 in tRNAs that read codons beginning with uridine.</text>
</comment>
<comment type="catalytic activity">
    <reaction evidence="1">
        <text>N(6)-dimethylallyladenosine(37) in tRNA + (sulfur carrier)-SH + AH2 + 2 S-adenosyl-L-methionine = 2-methylsulfanyl-N(6)-dimethylallyladenosine(37) in tRNA + (sulfur carrier)-H + 5'-deoxyadenosine + L-methionine + A + S-adenosyl-L-homocysteine + 2 H(+)</text>
        <dbReference type="Rhea" id="RHEA:37067"/>
        <dbReference type="Rhea" id="RHEA-COMP:10375"/>
        <dbReference type="Rhea" id="RHEA-COMP:10376"/>
        <dbReference type="Rhea" id="RHEA-COMP:14737"/>
        <dbReference type="Rhea" id="RHEA-COMP:14739"/>
        <dbReference type="ChEBI" id="CHEBI:13193"/>
        <dbReference type="ChEBI" id="CHEBI:15378"/>
        <dbReference type="ChEBI" id="CHEBI:17319"/>
        <dbReference type="ChEBI" id="CHEBI:17499"/>
        <dbReference type="ChEBI" id="CHEBI:29917"/>
        <dbReference type="ChEBI" id="CHEBI:57844"/>
        <dbReference type="ChEBI" id="CHEBI:57856"/>
        <dbReference type="ChEBI" id="CHEBI:59789"/>
        <dbReference type="ChEBI" id="CHEBI:64428"/>
        <dbReference type="ChEBI" id="CHEBI:74415"/>
        <dbReference type="ChEBI" id="CHEBI:74417"/>
        <dbReference type="EC" id="2.8.4.3"/>
    </reaction>
</comment>
<comment type="cofactor">
    <cofactor evidence="1">
        <name>[4Fe-4S] cluster</name>
        <dbReference type="ChEBI" id="CHEBI:49883"/>
    </cofactor>
    <text evidence="1">Binds 2 [4Fe-4S] clusters. One cluster is coordinated with 3 cysteines and an exchangeable S-adenosyl-L-methionine.</text>
</comment>
<comment type="subunit">
    <text evidence="1">Monomer.</text>
</comment>
<comment type="subcellular location">
    <subcellularLocation>
        <location evidence="1">Cytoplasm</location>
    </subcellularLocation>
</comment>
<comment type="similarity">
    <text evidence="1">Belongs to the methylthiotransferase family. MiaB subfamily.</text>
</comment>
<comment type="sequence caution" evidence="3">
    <conflict type="erroneous initiation">
        <sequence resource="EMBL-CDS" id="ACD47732"/>
    </conflict>
</comment>
<sequence length="437" mass="49304">MKVYIETMGCAMNSRDSEHLLSELSKLDYKETSDPKAADLILINTCSVREKPERKLFSEIGQFAKIKKPNAKIGVCGCTASHMGADILKKAPSVSFVLGARNVSKISQVIHKEKAVEVAIDYDESAYAFEFFEKKAQIRSLLNISIGCDKKCAYCIVPHTRGKEISIPMDLILKEAEKLASNGTKELMLLGQNVNNYGARFSSEHAKVDFSDLLDKLSEIQGIERIRFTSPHPLHMNDAFLERFAKNPKVCKSIHMPLQSGSSTVLKMMRRGYSKEWFLNRVEKLKALVPEVGISTDIIVGFPNESDKDFEDTMEVLEKVRFDTLYSFIYSPRPFTEAGAWKERVPLEVSSSRLERLQNRHKEILEEKAKLEVGKTHVVLVENRREIDNQIVGFEGRSDTGKFIEVACKEKRNPGELVRVEIVSHSKGRLIATAKGD</sequence>
<proteinExistence type="inferred from homology"/>
<gene>
    <name evidence="1" type="primary">miaB</name>
    <name type="ordered locus">HPSH_01400</name>
</gene>
<reference key="1">
    <citation type="submission" date="2008-05" db="EMBL/GenBank/DDBJ databases">
        <title>Genome sequence of Helicobacter pylori from the remote Amazon: traces of Asian ancestry of the first Americans.</title>
        <authorList>
            <person name="Kersulyte D."/>
            <person name="Kalia A."/>
            <person name="Gilman R.H."/>
            <person name="Berg D.E."/>
        </authorList>
    </citation>
    <scope>NUCLEOTIDE SEQUENCE [LARGE SCALE GENOMIC DNA]</scope>
    <source>
        <strain>Shi470</strain>
    </source>
</reference>
<name>MIAB_HELPS</name>
<protein>
    <recommendedName>
        <fullName evidence="1">tRNA-2-methylthio-N(6)-dimethylallyladenosine synthase</fullName>
        <ecNumber evidence="1">2.8.4.3</ecNumber>
    </recommendedName>
    <alternativeName>
        <fullName evidence="1">(Dimethylallyl)adenosine tRNA methylthiotransferase MiaB</fullName>
    </alternativeName>
    <alternativeName>
        <fullName evidence="1">tRNA-i(6)A37 methylthiotransferase</fullName>
    </alternativeName>
</protein>
<evidence type="ECO:0000255" key="1">
    <source>
        <dbReference type="HAMAP-Rule" id="MF_01864"/>
    </source>
</evidence>
<evidence type="ECO:0000255" key="2">
    <source>
        <dbReference type="PROSITE-ProRule" id="PRU01266"/>
    </source>
</evidence>
<evidence type="ECO:0000305" key="3"/>
<dbReference type="EC" id="2.8.4.3" evidence="1"/>
<dbReference type="EMBL" id="CP001072">
    <property type="protein sequence ID" value="ACD47732.1"/>
    <property type="status" value="ALT_INIT"/>
    <property type="molecule type" value="Genomic_DNA"/>
</dbReference>
<dbReference type="RefSeq" id="WP_000870198.1">
    <property type="nucleotide sequence ID" value="NC_010698.2"/>
</dbReference>
<dbReference type="SMR" id="B2USA0"/>
<dbReference type="KEGG" id="hps:HPSH_01400"/>
<dbReference type="HOGENOM" id="CLU_018697_2_0_7"/>
<dbReference type="GO" id="GO:0005829">
    <property type="term" value="C:cytosol"/>
    <property type="evidence" value="ECO:0007669"/>
    <property type="project" value="TreeGrafter"/>
</dbReference>
<dbReference type="GO" id="GO:0051539">
    <property type="term" value="F:4 iron, 4 sulfur cluster binding"/>
    <property type="evidence" value="ECO:0007669"/>
    <property type="project" value="UniProtKB-UniRule"/>
</dbReference>
<dbReference type="GO" id="GO:0046872">
    <property type="term" value="F:metal ion binding"/>
    <property type="evidence" value="ECO:0007669"/>
    <property type="project" value="UniProtKB-KW"/>
</dbReference>
<dbReference type="GO" id="GO:0035597">
    <property type="term" value="F:N6-isopentenyladenosine methylthiotransferase activity"/>
    <property type="evidence" value="ECO:0007669"/>
    <property type="project" value="TreeGrafter"/>
</dbReference>
<dbReference type="CDD" id="cd01335">
    <property type="entry name" value="Radical_SAM"/>
    <property type="match status" value="1"/>
</dbReference>
<dbReference type="FunFam" id="3.40.50.12160:FF:000003">
    <property type="entry name" value="CDK5 regulatory subunit-associated protein 1"/>
    <property type="match status" value="1"/>
</dbReference>
<dbReference type="FunFam" id="3.80.30.20:FF:000013">
    <property type="entry name" value="tRNA-2-methylthio-N(6)-dimethylallyladenosine synthase"/>
    <property type="match status" value="1"/>
</dbReference>
<dbReference type="Gene3D" id="3.40.50.12160">
    <property type="entry name" value="Methylthiotransferase, N-terminal domain"/>
    <property type="match status" value="1"/>
</dbReference>
<dbReference type="Gene3D" id="3.80.30.20">
    <property type="entry name" value="tm_1862 like domain"/>
    <property type="match status" value="1"/>
</dbReference>
<dbReference type="HAMAP" id="MF_01864">
    <property type="entry name" value="tRNA_metthiotr_MiaB"/>
    <property type="match status" value="1"/>
</dbReference>
<dbReference type="InterPro" id="IPR006638">
    <property type="entry name" value="Elp3/MiaA/NifB-like_rSAM"/>
</dbReference>
<dbReference type="InterPro" id="IPR005839">
    <property type="entry name" value="Methylthiotransferase"/>
</dbReference>
<dbReference type="InterPro" id="IPR020612">
    <property type="entry name" value="Methylthiotransferase_CS"/>
</dbReference>
<dbReference type="InterPro" id="IPR013848">
    <property type="entry name" value="Methylthiotransferase_N"/>
</dbReference>
<dbReference type="InterPro" id="IPR038135">
    <property type="entry name" value="Methylthiotransferase_N_sf"/>
</dbReference>
<dbReference type="InterPro" id="IPR006463">
    <property type="entry name" value="MiaB_methiolase"/>
</dbReference>
<dbReference type="InterPro" id="IPR007197">
    <property type="entry name" value="rSAM"/>
</dbReference>
<dbReference type="InterPro" id="IPR023404">
    <property type="entry name" value="rSAM_horseshoe"/>
</dbReference>
<dbReference type="InterPro" id="IPR002792">
    <property type="entry name" value="TRAM_dom"/>
</dbReference>
<dbReference type="NCBIfam" id="TIGR01574">
    <property type="entry name" value="miaB-methiolase"/>
    <property type="match status" value="1"/>
</dbReference>
<dbReference type="NCBIfam" id="TIGR00089">
    <property type="entry name" value="MiaB/RimO family radical SAM methylthiotransferase"/>
    <property type="match status" value="1"/>
</dbReference>
<dbReference type="PANTHER" id="PTHR43020">
    <property type="entry name" value="CDK5 REGULATORY SUBUNIT-ASSOCIATED PROTEIN 1"/>
    <property type="match status" value="1"/>
</dbReference>
<dbReference type="PANTHER" id="PTHR43020:SF2">
    <property type="entry name" value="MITOCHONDRIAL TRNA METHYLTHIOTRANSFERASE CDK5RAP1"/>
    <property type="match status" value="1"/>
</dbReference>
<dbReference type="Pfam" id="PF04055">
    <property type="entry name" value="Radical_SAM"/>
    <property type="match status" value="1"/>
</dbReference>
<dbReference type="Pfam" id="PF00919">
    <property type="entry name" value="UPF0004"/>
    <property type="match status" value="1"/>
</dbReference>
<dbReference type="SFLD" id="SFLDF00273">
    <property type="entry name" value="(dimethylallyl)adenosine_tRNA"/>
    <property type="match status" value="1"/>
</dbReference>
<dbReference type="SFLD" id="SFLDG01082">
    <property type="entry name" value="B12-binding_domain_containing"/>
    <property type="match status" value="1"/>
</dbReference>
<dbReference type="SFLD" id="SFLDG01061">
    <property type="entry name" value="methylthiotransferase"/>
    <property type="match status" value="1"/>
</dbReference>
<dbReference type="SMART" id="SM00729">
    <property type="entry name" value="Elp3"/>
    <property type="match status" value="1"/>
</dbReference>
<dbReference type="SUPFAM" id="SSF102114">
    <property type="entry name" value="Radical SAM enzymes"/>
    <property type="match status" value="1"/>
</dbReference>
<dbReference type="PROSITE" id="PS51449">
    <property type="entry name" value="MTTASE_N"/>
    <property type="match status" value="1"/>
</dbReference>
<dbReference type="PROSITE" id="PS01278">
    <property type="entry name" value="MTTASE_RADICAL"/>
    <property type="match status" value="1"/>
</dbReference>
<dbReference type="PROSITE" id="PS51918">
    <property type="entry name" value="RADICAL_SAM"/>
    <property type="match status" value="1"/>
</dbReference>
<dbReference type="PROSITE" id="PS50926">
    <property type="entry name" value="TRAM"/>
    <property type="match status" value="1"/>
</dbReference>
<accession>B2USA0</accession>
<feature type="chain" id="PRO_0000374340" description="tRNA-2-methylthio-N(6)-dimethylallyladenosine synthase">
    <location>
        <begin position="1"/>
        <end position="437"/>
    </location>
</feature>
<feature type="domain" description="MTTase N-terminal" evidence="1">
    <location>
        <begin position="1"/>
        <end position="115"/>
    </location>
</feature>
<feature type="domain" description="Radical SAM core" evidence="2">
    <location>
        <begin position="134"/>
        <end position="367"/>
    </location>
</feature>
<feature type="domain" description="TRAM" evidence="1">
    <location>
        <begin position="370"/>
        <end position="436"/>
    </location>
</feature>
<feature type="binding site" evidence="1">
    <location>
        <position position="10"/>
    </location>
    <ligand>
        <name>[4Fe-4S] cluster</name>
        <dbReference type="ChEBI" id="CHEBI:49883"/>
        <label>1</label>
    </ligand>
</feature>
<feature type="binding site" evidence="1">
    <location>
        <position position="46"/>
    </location>
    <ligand>
        <name>[4Fe-4S] cluster</name>
        <dbReference type="ChEBI" id="CHEBI:49883"/>
        <label>1</label>
    </ligand>
</feature>
<feature type="binding site" evidence="1">
    <location>
        <position position="78"/>
    </location>
    <ligand>
        <name>[4Fe-4S] cluster</name>
        <dbReference type="ChEBI" id="CHEBI:49883"/>
        <label>1</label>
    </ligand>
</feature>
<feature type="binding site" evidence="1">
    <location>
        <position position="148"/>
    </location>
    <ligand>
        <name>[4Fe-4S] cluster</name>
        <dbReference type="ChEBI" id="CHEBI:49883"/>
        <label>2</label>
        <note>4Fe-4S-S-AdoMet</note>
    </ligand>
</feature>
<feature type="binding site" evidence="1">
    <location>
        <position position="152"/>
    </location>
    <ligand>
        <name>[4Fe-4S] cluster</name>
        <dbReference type="ChEBI" id="CHEBI:49883"/>
        <label>2</label>
        <note>4Fe-4S-S-AdoMet</note>
    </ligand>
</feature>
<feature type="binding site" evidence="1">
    <location>
        <position position="155"/>
    </location>
    <ligand>
        <name>[4Fe-4S] cluster</name>
        <dbReference type="ChEBI" id="CHEBI:49883"/>
        <label>2</label>
        <note>4Fe-4S-S-AdoMet</note>
    </ligand>
</feature>
<keyword id="KW-0004">4Fe-4S</keyword>
<keyword id="KW-0963">Cytoplasm</keyword>
<keyword id="KW-0408">Iron</keyword>
<keyword id="KW-0411">Iron-sulfur</keyword>
<keyword id="KW-0479">Metal-binding</keyword>
<keyword id="KW-0949">S-adenosyl-L-methionine</keyword>
<keyword id="KW-0808">Transferase</keyword>
<keyword id="KW-0819">tRNA processing</keyword>
<organism>
    <name type="scientific">Helicobacter pylori (strain Shi470)</name>
    <dbReference type="NCBI Taxonomy" id="512562"/>
    <lineage>
        <taxon>Bacteria</taxon>
        <taxon>Pseudomonadati</taxon>
        <taxon>Campylobacterota</taxon>
        <taxon>Epsilonproteobacteria</taxon>
        <taxon>Campylobacterales</taxon>
        <taxon>Helicobacteraceae</taxon>
        <taxon>Helicobacter</taxon>
    </lineage>
</organism>